<sequence length="310" mass="34570">MTVTVKMLVQKVKLDVVYATDNLLSKEITTSDISRPGLEMTGYFDYYAPERLQLFGMKEWSYLTQMTSHNRYSVLKEMFKKDTPAVVVSRNLAIPKEMVQAAKEEGISLLSSRVSTSRLAGEMSYFLDASLAERTSVHGVLMDIYGMGVLIQGDSGIGKSETGLELVKRGHRLVADDRVDVYAKDEETLWGEPAEILRHLLEIRGVGIIDVMSLYGASAVKDSSQVQLAIYLENFEAGKVFDRLGNGNEEITFSGVRIPRIRIPVKTGRNVSVVIEAAAMNHRAKEMGFDATKTFEDRLTQLITKNEVSQ</sequence>
<protein>
    <recommendedName>
        <fullName>HPr kinase/phosphorylase</fullName>
        <shortName>HPrK/P</shortName>
        <ecNumber>2.7.11.-</ecNumber>
        <ecNumber>2.7.4.-</ecNumber>
    </recommendedName>
    <alternativeName>
        <fullName>HPr(Ser) kinase/phosphorylase</fullName>
    </alternativeName>
</protein>
<accession>P68898</accession>
<accession>P82557</accession>
<accession>Q48ZW6</accession>
<accession>Q9A0W5</accession>
<gene>
    <name type="primary">hprK</name>
    <name type="synonym">ptsK</name>
    <name type="ordered locus">SPy_0584</name>
    <name type="ordered locus">M5005_Spy0484</name>
</gene>
<proteinExistence type="inferred from homology"/>
<keyword id="KW-0067">ATP-binding</keyword>
<keyword id="KW-0119">Carbohydrate metabolism</keyword>
<keyword id="KW-0418">Kinase</keyword>
<keyword id="KW-0460">Magnesium</keyword>
<keyword id="KW-0479">Metal-binding</keyword>
<keyword id="KW-0511">Multifunctional enzyme</keyword>
<keyword id="KW-0547">Nucleotide-binding</keyword>
<keyword id="KW-1185">Reference proteome</keyword>
<keyword id="KW-0723">Serine/threonine-protein kinase</keyword>
<keyword id="KW-0808">Transferase</keyword>
<evidence type="ECO:0000250" key="1"/>
<evidence type="ECO:0000255" key="2"/>
<evidence type="ECO:0000305" key="3"/>
<comment type="function">
    <text evidence="1">Catalyzes the ATP- as well as the pyrophosphate-dependent phosphorylation of a specific serine residue in HPr, a phosphocarrier protein of the phosphoenolpyruvate-dependent sugar phosphotransferase system (PTS). HprK/P also catalyzes the pyrophosphate-producing, inorganic phosphate-dependent dephosphorylation (phosphorolysis) of seryl-phosphorylated HPr (P-Ser-HPr). The two antagonistic activities of HprK/P are regulated by several intracellular metabolites, which change their concentration in response to the absence or presence of rapidly metabolisable carbon sources (glucose, fructose, etc.) in the growth medium. Therefore, by controlling the phosphorylation state of HPr, HPrK/P is a sensor enzyme that plays a major role in the regulation of carbon metabolism and sugar transport: it mediates carbon catabolite repression (CCR), and regulates PTS-catalyzed carbohydrate uptake and inducer exclusion (By similarity).</text>
</comment>
<comment type="catalytic activity">
    <reaction>
        <text>[HPr protein]-L-serine + ATP = [HPr protein]-O-phospho-L-serine + ADP + H(+)</text>
        <dbReference type="Rhea" id="RHEA:46600"/>
        <dbReference type="Rhea" id="RHEA-COMP:11602"/>
        <dbReference type="Rhea" id="RHEA-COMP:11603"/>
        <dbReference type="ChEBI" id="CHEBI:15378"/>
        <dbReference type="ChEBI" id="CHEBI:29999"/>
        <dbReference type="ChEBI" id="CHEBI:30616"/>
        <dbReference type="ChEBI" id="CHEBI:83421"/>
        <dbReference type="ChEBI" id="CHEBI:456216"/>
    </reaction>
</comment>
<comment type="catalytic activity">
    <reaction>
        <text>[HPr protein]-O-phospho-L-serine + phosphate + H(+) = [HPr protein]-L-serine + diphosphate</text>
        <dbReference type="Rhea" id="RHEA:46604"/>
        <dbReference type="Rhea" id="RHEA-COMP:11602"/>
        <dbReference type="Rhea" id="RHEA-COMP:11603"/>
        <dbReference type="ChEBI" id="CHEBI:15378"/>
        <dbReference type="ChEBI" id="CHEBI:29999"/>
        <dbReference type="ChEBI" id="CHEBI:33019"/>
        <dbReference type="ChEBI" id="CHEBI:43474"/>
        <dbReference type="ChEBI" id="CHEBI:83421"/>
    </reaction>
</comment>
<comment type="cofactor">
    <cofactor evidence="1">
        <name>Mg(2+)</name>
        <dbReference type="ChEBI" id="CHEBI:18420"/>
    </cofactor>
</comment>
<comment type="subunit">
    <text evidence="1">Homohexamer.</text>
</comment>
<comment type="domain">
    <text evidence="1">The Walker A ATP-binding motif also binds Pi and PPi.</text>
</comment>
<comment type="miscellaneous">
    <text evidence="1">Both phosphorylation and phosphorolysis are carried out by the same active site and suggest a common mechanism for both reactions.</text>
</comment>
<comment type="similarity">
    <text evidence="3">Belongs to the HPrK/P family.</text>
</comment>
<comment type="sequence caution" evidence="3">
    <conflict type="erroneous initiation">
        <sequence resource="EMBL-CDS" id="AAZ51102"/>
    </conflict>
    <text>Extended N-terminus.</text>
</comment>
<feature type="chain" id="PRO_0000058998" description="HPr kinase/phosphorylase">
    <location>
        <begin position="1"/>
        <end position="310"/>
    </location>
</feature>
<feature type="region of interest" description="Important for the catalytic mechanism of both phosphorylation and dephosphorylation" evidence="1">
    <location>
        <begin position="201"/>
        <end position="210"/>
    </location>
</feature>
<feature type="region of interest" description="Important for the catalytic mechanism of dephosphorylation" evidence="1">
    <location>
        <begin position="264"/>
        <end position="269"/>
    </location>
</feature>
<feature type="active site" evidence="1">
    <location>
        <position position="138"/>
    </location>
</feature>
<feature type="active site" evidence="1">
    <location>
        <position position="159"/>
    </location>
</feature>
<feature type="active site" description="Proton acceptor; for phosphorylation activity. Proton donor; for dephosphorylation activity" evidence="1">
    <location>
        <position position="177"/>
    </location>
</feature>
<feature type="active site" evidence="1">
    <location>
        <position position="243"/>
    </location>
</feature>
<feature type="binding site" evidence="1">
    <location>
        <begin position="153"/>
        <end position="160"/>
    </location>
    <ligand>
        <name>ATP</name>
        <dbReference type="ChEBI" id="CHEBI:30616"/>
    </ligand>
</feature>
<feature type="binding site" evidence="2">
    <location>
        <position position="160"/>
    </location>
    <ligand>
        <name>Mg(2+)</name>
        <dbReference type="ChEBI" id="CHEBI:18420"/>
    </ligand>
</feature>
<feature type="binding site" evidence="2">
    <location>
        <position position="202"/>
    </location>
    <ligand>
        <name>Mg(2+)</name>
        <dbReference type="ChEBI" id="CHEBI:18420"/>
    </ligand>
</feature>
<reference key="1">
    <citation type="journal article" date="2001" name="Proc. Natl. Acad. Sci. U.S.A.">
        <title>Complete genome sequence of an M1 strain of Streptococcus pyogenes.</title>
        <authorList>
            <person name="Ferretti J.J."/>
            <person name="McShan W.M."/>
            <person name="Ajdic D.J."/>
            <person name="Savic D.J."/>
            <person name="Savic G."/>
            <person name="Lyon K."/>
            <person name="Primeaux C."/>
            <person name="Sezate S."/>
            <person name="Suvorov A.N."/>
            <person name="Kenton S."/>
            <person name="Lai H.S."/>
            <person name="Lin S.P."/>
            <person name="Qian Y."/>
            <person name="Jia H.G."/>
            <person name="Najar F.Z."/>
            <person name="Ren Q."/>
            <person name="Zhu H."/>
            <person name="Song L."/>
            <person name="White J."/>
            <person name="Yuan X."/>
            <person name="Clifton S.W."/>
            <person name="Roe B.A."/>
            <person name="McLaughlin R.E."/>
        </authorList>
    </citation>
    <scope>NUCLEOTIDE SEQUENCE [LARGE SCALE GENOMIC DNA]</scope>
    <source>
        <strain>ATCC 700294 / SF370 / Serotype M1</strain>
    </source>
</reference>
<reference key="2">
    <citation type="journal article" date="2005" name="J. Infect. Dis.">
        <title>Evolutionary origin and emergence of a highly successful clone of serotype M1 group A Streptococcus involved multiple horizontal gene transfer events.</title>
        <authorList>
            <person name="Sumby P."/>
            <person name="Porcella S.F."/>
            <person name="Madrigal A.G."/>
            <person name="Barbian K.D."/>
            <person name="Virtaneva K."/>
            <person name="Ricklefs S.M."/>
            <person name="Sturdevant D.E."/>
            <person name="Graham M.R."/>
            <person name="Vuopio-Varkila J."/>
            <person name="Hoe N.P."/>
            <person name="Musser J.M."/>
        </authorList>
    </citation>
    <scope>NUCLEOTIDE SEQUENCE [LARGE SCALE GENOMIC DNA]</scope>
    <source>
        <strain>ATCC BAA-947 / MGAS5005 / Serotype M1</strain>
    </source>
</reference>
<reference key="3">
    <citation type="submission" date="2014-04" db="EMBL/GenBank/DDBJ databases">
        <authorList>
            <person name="Beres S.B."/>
            <person name="Musser J.M."/>
        </authorList>
    </citation>
    <scope>SEQUENCE REVISION</scope>
</reference>
<dbReference type="EC" id="2.7.11.-"/>
<dbReference type="EC" id="2.7.4.-"/>
<dbReference type="EMBL" id="AE004092">
    <property type="protein sequence ID" value="AAK33566.1"/>
    <property type="molecule type" value="Genomic_DNA"/>
</dbReference>
<dbReference type="EMBL" id="CP000017">
    <property type="protein sequence ID" value="AAZ51102.2"/>
    <property type="status" value="ALT_INIT"/>
    <property type="molecule type" value="Genomic_DNA"/>
</dbReference>
<dbReference type="RefSeq" id="NP_268845.3">
    <property type="nucleotide sequence ID" value="NC_002737.2"/>
</dbReference>
<dbReference type="SMR" id="P68898"/>
<dbReference type="PaxDb" id="1314-HKU360_00498"/>
<dbReference type="KEGG" id="spy:SPy_0584"/>
<dbReference type="KEGG" id="spz:M5005_Spy0484"/>
<dbReference type="PATRIC" id="fig|160490.10.peg.500"/>
<dbReference type="HOGENOM" id="CLU_052030_0_1_9"/>
<dbReference type="OMA" id="IFPGKNI"/>
<dbReference type="Proteomes" id="UP000000750">
    <property type="component" value="Chromosome"/>
</dbReference>
<dbReference type="GO" id="GO:0005524">
    <property type="term" value="F:ATP binding"/>
    <property type="evidence" value="ECO:0007669"/>
    <property type="project" value="UniProtKB-UniRule"/>
</dbReference>
<dbReference type="GO" id="GO:0000287">
    <property type="term" value="F:magnesium ion binding"/>
    <property type="evidence" value="ECO:0007669"/>
    <property type="project" value="UniProtKB-UniRule"/>
</dbReference>
<dbReference type="GO" id="GO:0000155">
    <property type="term" value="F:phosphorelay sensor kinase activity"/>
    <property type="evidence" value="ECO:0007669"/>
    <property type="project" value="InterPro"/>
</dbReference>
<dbReference type="GO" id="GO:0004674">
    <property type="term" value="F:protein serine/threonine kinase activity"/>
    <property type="evidence" value="ECO:0007669"/>
    <property type="project" value="UniProtKB-KW"/>
</dbReference>
<dbReference type="GO" id="GO:0004712">
    <property type="term" value="F:protein serine/threonine/tyrosine kinase activity"/>
    <property type="evidence" value="ECO:0007669"/>
    <property type="project" value="UniProtKB-UniRule"/>
</dbReference>
<dbReference type="GO" id="GO:0006109">
    <property type="term" value="P:regulation of carbohydrate metabolic process"/>
    <property type="evidence" value="ECO:0007669"/>
    <property type="project" value="UniProtKB-UniRule"/>
</dbReference>
<dbReference type="CDD" id="cd01918">
    <property type="entry name" value="HprK_C"/>
    <property type="match status" value="1"/>
</dbReference>
<dbReference type="FunFam" id="3.40.50.300:FF:000174">
    <property type="entry name" value="HPr kinase/phosphorylase"/>
    <property type="match status" value="1"/>
</dbReference>
<dbReference type="Gene3D" id="3.40.1390.20">
    <property type="entry name" value="HprK N-terminal domain-like"/>
    <property type="match status" value="1"/>
</dbReference>
<dbReference type="Gene3D" id="3.40.50.300">
    <property type="entry name" value="P-loop containing nucleotide triphosphate hydrolases"/>
    <property type="match status" value="1"/>
</dbReference>
<dbReference type="HAMAP" id="MF_01249">
    <property type="entry name" value="HPr_kinase"/>
    <property type="match status" value="1"/>
</dbReference>
<dbReference type="InterPro" id="IPR003755">
    <property type="entry name" value="HPr(Ser)_kin/Pase"/>
</dbReference>
<dbReference type="InterPro" id="IPR011104">
    <property type="entry name" value="Hpr_kin/Pase_C"/>
</dbReference>
<dbReference type="InterPro" id="IPR011126">
    <property type="entry name" value="Hpr_kin/Pase_Hpr_N"/>
</dbReference>
<dbReference type="InterPro" id="IPR027417">
    <property type="entry name" value="P-loop_NTPase"/>
</dbReference>
<dbReference type="InterPro" id="IPR028979">
    <property type="entry name" value="Ser_kin/Pase_Hpr-like_N_sf"/>
</dbReference>
<dbReference type="NCBIfam" id="TIGR00679">
    <property type="entry name" value="hpr-ser"/>
    <property type="match status" value="1"/>
</dbReference>
<dbReference type="PANTHER" id="PTHR30305:SF1">
    <property type="entry name" value="HPR KINASE_PHOSPHORYLASE"/>
    <property type="match status" value="1"/>
</dbReference>
<dbReference type="PANTHER" id="PTHR30305">
    <property type="entry name" value="PROTEIN YJDM-RELATED"/>
    <property type="match status" value="1"/>
</dbReference>
<dbReference type="Pfam" id="PF07475">
    <property type="entry name" value="Hpr_kinase_C"/>
    <property type="match status" value="1"/>
</dbReference>
<dbReference type="Pfam" id="PF02603">
    <property type="entry name" value="Hpr_kinase_N"/>
    <property type="match status" value="1"/>
</dbReference>
<dbReference type="SUPFAM" id="SSF75138">
    <property type="entry name" value="HprK N-terminal domain-like"/>
    <property type="match status" value="1"/>
</dbReference>
<dbReference type="SUPFAM" id="SSF53795">
    <property type="entry name" value="PEP carboxykinase-like"/>
    <property type="match status" value="1"/>
</dbReference>
<organism>
    <name type="scientific">Streptococcus pyogenes serotype M1</name>
    <dbReference type="NCBI Taxonomy" id="301447"/>
    <lineage>
        <taxon>Bacteria</taxon>
        <taxon>Bacillati</taxon>
        <taxon>Bacillota</taxon>
        <taxon>Bacilli</taxon>
        <taxon>Lactobacillales</taxon>
        <taxon>Streptococcaceae</taxon>
        <taxon>Streptococcus</taxon>
    </lineage>
</organism>
<name>HPRK_STRP1</name>